<reference key="1">
    <citation type="journal article" date="2007" name="Nat. Biotechnol.">
        <title>Genome sequence of the lignocellulose-bioconverting and xylose-fermenting yeast Pichia stipitis.</title>
        <authorList>
            <person name="Jeffries T.W."/>
            <person name="Grigoriev I.V."/>
            <person name="Grimwood J."/>
            <person name="Laplaza J.M."/>
            <person name="Aerts A."/>
            <person name="Salamov A."/>
            <person name="Schmutz J."/>
            <person name="Lindquist E."/>
            <person name="Dehal P."/>
            <person name="Shapiro H."/>
            <person name="Jin Y.-S."/>
            <person name="Passoth V."/>
            <person name="Richardson P.M."/>
        </authorList>
    </citation>
    <scope>NUCLEOTIDE SEQUENCE [LARGE SCALE GENOMIC DNA]</scope>
    <source>
        <strain>ATCC 58785 / CBS 6054 / NBRC 10063 / NRRL Y-11545</strain>
    </source>
</reference>
<accession>A3GGT2</accession>
<dbReference type="EMBL" id="AAVQ01000001">
    <property type="protein sequence ID" value="EAZ63588.2"/>
    <property type="molecule type" value="Genomic_DNA"/>
</dbReference>
<dbReference type="RefSeq" id="XP_001387611.2">
    <property type="nucleotide sequence ID" value="XM_001387574.1"/>
</dbReference>
<dbReference type="STRING" id="322104.A3GGT2"/>
<dbReference type="GeneID" id="4851481"/>
<dbReference type="KEGG" id="pic:PICST_28729"/>
<dbReference type="eggNOG" id="KOG4102">
    <property type="taxonomic scope" value="Eukaryota"/>
</dbReference>
<dbReference type="HOGENOM" id="CLU_098333_3_0_1"/>
<dbReference type="InParanoid" id="A3GGT2"/>
<dbReference type="OMA" id="NDSCGRE"/>
<dbReference type="OrthoDB" id="307488at2759"/>
<dbReference type="Proteomes" id="UP000002258">
    <property type="component" value="Chromosome 1"/>
</dbReference>
<dbReference type="GO" id="GO:0005634">
    <property type="term" value="C:nucleus"/>
    <property type="evidence" value="ECO:0007669"/>
    <property type="project" value="UniProtKB-SubCell"/>
</dbReference>
<dbReference type="GO" id="GO:0008157">
    <property type="term" value="F:protein phosphatase 1 binding"/>
    <property type="evidence" value="ECO:0007669"/>
    <property type="project" value="TreeGrafter"/>
</dbReference>
<dbReference type="GO" id="GO:0004865">
    <property type="term" value="F:protein serine/threonine phosphatase inhibitor activity"/>
    <property type="evidence" value="ECO:0007669"/>
    <property type="project" value="InterPro"/>
</dbReference>
<dbReference type="InterPro" id="IPR011107">
    <property type="entry name" value="PPI_Ypi1"/>
</dbReference>
<dbReference type="PANTHER" id="PTHR20835:SF0">
    <property type="entry name" value="E3 UBIQUITIN-PROTEIN LIGASE PPP1R11"/>
    <property type="match status" value="1"/>
</dbReference>
<dbReference type="PANTHER" id="PTHR20835">
    <property type="entry name" value="E3 UBIQUITIN-PROTEIN LIGASE PPP1R11-RELATED"/>
    <property type="match status" value="1"/>
</dbReference>
<dbReference type="Pfam" id="PF07491">
    <property type="entry name" value="PPI_Ypi1"/>
    <property type="match status" value="1"/>
</dbReference>
<keyword id="KW-0539">Nucleus</keyword>
<keyword id="KW-1185">Reference proteome</keyword>
<comment type="function">
    <text evidence="1">Regulator of type 1 phosphatases which maintains protein phosphatase activity under strict control.</text>
</comment>
<comment type="subcellular location">
    <subcellularLocation>
        <location evidence="1">Nucleus</location>
    </subcellularLocation>
</comment>
<comment type="similarity">
    <text evidence="3">Belongs to the YPI1 family.</text>
</comment>
<proteinExistence type="inferred from homology"/>
<protein>
    <recommendedName>
        <fullName>Type 1 phosphatases regulator YPI2</fullName>
    </recommendedName>
</protein>
<feature type="chain" id="PRO_0000333489" description="Type 1 phosphatases regulator YPI2">
    <location>
        <begin position="1"/>
        <end position="192"/>
    </location>
</feature>
<feature type="region of interest" description="Disordered" evidence="2">
    <location>
        <begin position="1"/>
        <end position="53"/>
    </location>
</feature>
<feature type="region of interest" description="Disordered" evidence="2">
    <location>
        <begin position="65"/>
        <end position="192"/>
    </location>
</feature>
<feature type="compositionally biased region" description="Low complexity" evidence="2">
    <location>
        <begin position="8"/>
        <end position="18"/>
    </location>
</feature>
<feature type="compositionally biased region" description="Basic and acidic residues" evidence="2">
    <location>
        <begin position="25"/>
        <end position="49"/>
    </location>
</feature>
<feature type="compositionally biased region" description="Low complexity" evidence="2">
    <location>
        <begin position="69"/>
        <end position="79"/>
    </location>
</feature>
<feature type="compositionally biased region" description="Basic and acidic residues" evidence="2">
    <location>
        <begin position="86"/>
        <end position="103"/>
    </location>
</feature>
<feature type="compositionally biased region" description="Polar residues" evidence="2">
    <location>
        <begin position="134"/>
        <end position="148"/>
    </location>
</feature>
<feature type="compositionally biased region" description="Basic residues" evidence="2">
    <location>
        <begin position="157"/>
        <end position="169"/>
    </location>
</feature>
<sequence>MLQRNRIQTSSSTQTETTPPILRLRRPETRQKEDSKVKWTEDVIDNEHMGKHKSKVCCIFHPHREFGQSSDESSDSSSDSSDDSDYERNNDFDQNHRHSHNFDDINSDNSHSHSHGHNFDDKDDISNSSNNQDKGNTGMSKPSSSSPDNLVCEYGHIHKRNKKVRKPKRSSSPNAYERQPNYRNKSVVPVQK</sequence>
<name>YPI2_PICST</name>
<gene>
    <name type="primary">YPI2</name>
    <name type="ORF">PICST_28729</name>
</gene>
<evidence type="ECO:0000250" key="1"/>
<evidence type="ECO:0000256" key="2">
    <source>
        <dbReference type="SAM" id="MobiDB-lite"/>
    </source>
</evidence>
<evidence type="ECO:0000305" key="3"/>
<organism>
    <name type="scientific">Scheffersomyces stipitis (strain ATCC 58785 / CBS 6054 / NBRC 10063 / NRRL Y-11545)</name>
    <name type="common">Yeast</name>
    <name type="synonym">Pichia stipitis</name>
    <dbReference type="NCBI Taxonomy" id="322104"/>
    <lineage>
        <taxon>Eukaryota</taxon>
        <taxon>Fungi</taxon>
        <taxon>Dikarya</taxon>
        <taxon>Ascomycota</taxon>
        <taxon>Saccharomycotina</taxon>
        <taxon>Pichiomycetes</taxon>
        <taxon>Debaryomycetaceae</taxon>
        <taxon>Scheffersomyces</taxon>
    </lineage>
</organism>